<evidence type="ECO:0000250" key="1"/>
<evidence type="ECO:0000305" key="2"/>
<comment type="function">
    <text evidence="1">Catalyzes the transfer of a two-carbon ketol group from a ketose donor to an aldose acceptor, via a covalent intermediate with the cofactor thiamine pyrophosphate.</text>
</comment>
<comment type="catalytic activity">
    <reaction>
        <text>D-sedoheptulose 7-phosphate + D-glyceraldehyde 3-phosphate = aldehydo-D-ribose 5-phosphate + D-xylulose 5-phosphate</text>
        <dbReference type="Rhea" id="RHEA:10508"/>
        <dbReference type="ChEBI" id="CHEBI:57483"/>
        <dbReference type="ChEBI" id="CHEBI:57737"/>
        <dbReference type="ChEBI" id="CHEBI:58273"/>
        <dbReference type="ChEBI" id="CHEBI:59776"/>
        <dbReference type="EC" id="2.2.1.1"/>
    </reaction>
</comment>
<comment type="cofactor">
    <cofactor evidence="1">
        <name>Mg(2+)</name>
        <dbReference type="ChEBI" id="CHEBI:18420"/>
    </cofactor>
    <cofactor evidence="1">
        <name>Ca(2+)</name>
        <dbReference type="ChEBI" id="CHEBI:29108"/>
    </cofactor>
    <cofactor evidence="1">
        <name>Mn(2+)</name>
        <dbReference type="ChEBI" id="CHEBI:29035"/>
    </cofactor>
    <cofactor evidence="1">
        <name>Co(2+)</name>
        <dbReference type="ChEBI" id="CHEBI:48828"/>
    </cofactor>
    <text evidence="1">Binds 1 Mg(2+) ion per subunit. Can also utilize other divalent metal cations, such as Ca(2+), Mn(2+) and Co(2+).</text>
</comment>
<comment type="cofactor">
    <cofactor evidence="1">
        <name>thiamine diphosphate</name>
        <dbReference type="ChEBI" id="CHEBI:58937"/>
    </cofactor>
    <text evidence="1">Binds 1 thiamine pyrophosphate per subunit.</text>
</comment>
<comment type="subunit">
    <text evidence="1">Homodimer.</text>
</comment>
<comment type="similarity">
    <text evidence="2">Belongs to the transketolase family.</text>
</comment>
<comment type="sequence caution" evidence="2">
    <conflict type="erroneous initiation">
        <sequence resource="EMBL-CDS" id="AAO09963"/>
    </conflict>
</comment>
<proteinExistence type="inferred from homology"/>
<organism>
    <name type="scientific">Vibrio vulnificus (strain CMCP6)</name>
    <dbReference type="NCBI Taxonomy" id="216895"/>
    <lineage>
        <taxon>Bacteria</taxon>
        <taxon>Pseudomonadati</taxon>
        <taxon>Pseudomonadota</taxon>
        <taxon>Gammaproteobacteria</taxon>
        <taxon>Vibrionales</taxon>
        <taxon>Vibrionaceae</taxon>
        <taxon>Vibrio</taxon>
    </lineage>
</organism>
<reference key="1">
    <citation type="submission" date="2002-12" db="EMBL/GenBank/DDBJ databases">
        <title>Complete genome sequence of Vibrio vulnificus CMCP6.</title>
        <authorList>
            <person name="Rhee J.H."/>
            <person name="Kim S.Y."/>
            <person name="Chung S.S."/>
            <person name="Kim J.J."/>
            <person name="Moon Y.H."/>
            <person name="Jeong H."/>
            <person name="Choy H.E."/>
        </authorList>
    </citation>
    <scope>NUCLEOTIDE SEQUENCE [LARGE SCALE GENOMIC DNA]</scope>
    <source>
        <strain>CMCP6</strain>
    </source>
</reference>
<accession>Q8DCA2</accession>
<feature type="chain" id="PRO_0000191886" description="Transketolase 1">
    <location>
        <begin position="1"/>
        <end position="664"/>
    </location>
</feature>
<feature type="active site" description="Proton donor" evidence="1">
    <location>
        <position position="411"/>
    </location>
</feature>
<feature type="binding site" evidence="1">
    <location>
        <position position="26"/>
    </location>
    <ligand>
        <name>substrate</name>
    </ligand>
</feature>
<feature type="binding site" evidence="1">
    <location>
        <position position="66"/>
    </location>
    <ligand>
        <name>thiamine diphosphate</name>
        <dbReference type="ChEBI" id="CHEBI:58937"/>
    </ligand>
</feature>
<feature type="binding site" evidence="1">
    <location>
        <begin position="114"/>
        <end position="116"/>
    </location>
    <ligand>
        <name>thiamine diphosphate</name>
        <dbReference type="ChEBI" id="CHEBI:58937"/>
    </ligand>
</feature>
<feature type="binding site" evidence="1">
    <location>
        <position position="155"/>
    </location>
    <ligand>
        <name>Mg(2+)</name>
        <dbReference type="ChEBI" id="CHEBI:18420"/>
    </ligand>
</feature>
<feature type="binding site" evidence="1">
    <location>
        <position position="156"/>
    </location>
    <ligand>
        <name>thiamine diphosphate</name>
        <dbReference type="ChEBI" id="CHEBI:58937"/>
    </ligand>
</feature>
<feature type="binding site" evidence="1">
    <location>
        <position position="185"/>
    </location>
    <ligand>
        <name>Mg(2+)</name>
        <dbReference type="ChEBI" id="CHEBI:18420"/>
    </ligand>
</feature>
<feature type="binding site" evidence="1">
    <location>
        <position position="185"/>
    </location>
    <ligand>
        <name>thiamine diphosphate</name>
        <dbReference type="ChEBI" id="CHEBI:58937"/>
    </ligand>
</feature>
<feature type="binding site" evidence="1">
    <location>
        <position position="187"/>
    </location>
    <ligand>
        <name>Mg(2+)</name>
        <dbReference type="ChEBI" id="CHEBI:18420"/>
    </ligand>
</feature>
<feature type="binding site" evidence="1">
    <location>
        <position position="260"/>
    </location>
    <ligand>
        <name>substrate</name>
    </ligand>
</feature>
<feature type="binding site" evidence="1">
    <location>
        <position position="260"/>
    </location>
    <ligand>
        <name>thiamine diphosphate</name>
        <dbReference type="ChEBI" id="CHEBI:58937"/>
    </ligand>
</feature>
<feature type="binding site" evidence="1">
    <location>
        <position position="357"/>
    </location>
    <ligand>
        <name>substrate</name>
    </ligand>
</feature>
<feature type="binding site" evidence="1">
    <location>
        <position position="384"/>
    </location>
    <ligand>
        <name>substrate</name>
    </ligand>
</feature>
<feature type="binding site" evidence="1">
    <location>
        <position position="437"/>
    </location>
    <ligand>
        <name>thiamine diphosphate</name>
        <dbReference type="ChEBI" id="CHEBI:58937"/>
    </ligand>
</feature>
<feature type="binding site" evidence="1">
    <location>
        <position position="461"/>
    </location>
    <ligand>
        <name>substrate</name>
    </ligand>
</feature>
<feature type="binding site" evidence="1">
    <location>
        <position position="469"/>
    </location>
    <ligand>
        <name>substrate</name>
    </ligand>
</feature>
<feature type="binding site" evidence="1">
    <location>
        <position position="520"/>
    </location>
    <ligand>
        <name>substrate</name>
    </ligand>
</feature>
<feature type="site" description="Important for catalytic activity" evidence="1">
    <location>
        <position position="26"/>
    </location>
</feature>
<feature type="site" description="Important for catalytic activity" evidence="1">
    <location>
        <position position="260"/>
    </location>
</feature>
<protein>
    <recommendedName>
        <fullName>Transketolase 1</fullName>
        <shortName>TK 1</shortName>
        <ecNumber>2.2.1.1</ecNumber>
    </recommendedName>
</protein>
<dbReference type="EC" id="2.2.1.1"/>
<dbReference type="EMBL" id="AE016795">
    <property type="protein sequence ID" value="AAO09963.1"/>
    <property type="status" value="ALT_INIT"/>
    <property type="molecule type" value="Genomic_DNA"/>
</dbReference>
<dbReference type="RefSeq" id="WP_043920938.1">
    <property type="nucleotide sequence ID" value="NC_004459.3"/>
</dbReference>
<dbReference type="SMR" id="Q8DCA2"/>
<dbReference type="KEGG" id="vvu:VV1_1537"/>
<dbReference type="HOGENOM" id="CLU_009227_0_1_6"/>
<dbReference type="Proteomes" id="UP000002275">
    <property type="component" value="Chromosome 1"/>
</dbReference>
<dbReference type="GO" id="GO:0005829">
    <property type="term" value="C:cytosol"/>
    <property type="evidence" value="ECO:0007669"/>
    <property type="project" value="TreeGrafter"/>
</dbReference>
<dbReference type="GO" id="GO:0046872">
    <property type="term" value="F:metal ion binding"/>
    <property type="evidence" value="ECO:0007669"/>
    <property type="project" value="UniProtKB-KW"/>
</dbReference>
<dbReference type="GO" id="GO:0004802">
    <property type="term" value="F:transketolase activity"/>
    <property type="evidence" value="ECO:0007669"/>
    <property type="project" value="UniProtKB-EC"/>
</dbReference>
<dbReference type="GO" id="GO:0006098">
    <property type="term" value="P:pentose-phosphate shunt"/>
    <property type="evidence" value="ECO:0007669"/>
    <property type="project" value="TreeGrafter"/>
</dbReference>
<dbReference type="CDD" id="cd07033">
    <property type="entry name" value="TPP_PYR_DXS_TK_like"/>
    <property type="match status" value="1"/>
</dbReference>
<dbReference type="CDD" id="cd02012">
    <property type="entry name" value="TPP_TK"/>
    <property type="match status" value="1"/>
</dbReference>
<dbReference type="FunFam" id="3.40.50.920:FF:000003">
    <property type="entry name" value="Transketolase"/>
    <property type="match status" value="1"/>
</dbReference>
<dbReference type="FunFam" id="3.40.50.970:FF:000003">
    <property type="entry name" value="Transketolase"/>
    <property type="match status" value="1"/>
</dbReference>
<dbReference type="FunFam" id="3.40.50.970:FF:000004">
    <property type="entry name" value="Transketolase"/>
    <property type="match status" value="1"/>
</dbReference>
<dbReference type="Gene3D" id="3.40.50.920">
    <property type="match status" value="1"/>
</dbReference>
<dbReference type="Gene3D" id="3.40.50.970">
    <property type="match status" value="2"/>
</dbReference>
<dbReference type="InterPro" id="IPR029061">
    <property type="entry name" value="THDP-binding"/>
</dbReference>
<dbReference type="InterPro" id="IPR009014">
    <property type="entry name" value="Transketo_C/PFOR_II"/>
</dbReference>
<dbReference type="InterPro" id="IPR055152">
    <property type="entry name" value="Transketolase-like_C_2"/>
</dbReference>
<dbReference type="InterPro" id="IPR005475">
    <property type="entry name" value="Transketolase-like_Pyr-bd"/>
</dbReference>
<dbReference type="InterPro" id="IPR005478">
    <property type="entry name" value="Transketolase_bac-like"/>
</dbReference>
<dbReference type="InterPro" id="IPR020826">
    <property type="entry name" value="Transketolase_BS"/>
</dbReference>
<dbReference type="InterPro" id="IPR049557">
    <property type="entry name" value="Transketolase_CS"/>
</dbReference>
<dbReference type="InterPro" id="IPR033247">
    <property type="entry name" value="Transketolase_fam"/>
</dbReference>
<dbReference type="InterPro" id="IPR005474">
    <property type="entry name" value="Transketolase_N"/>
</dbReference>
<dbReference type="NCBIfam" id="TIGR00232">
    <property type="entry name" value="tktlase_bact"/>
    <property type="match status" value="1"/>
</dbReference>
<dbReference type="PANTHER" id="PTHR43522">
    <property type="entry name" value="TRANSKETOLASE"/>
    <property type="match status" value="1"/>
</dbReference>
<dbReference type="PANTHER" id="PTHR43522:SF2">
    <property type="entry name" value="TRANSKETOLASE 1-RELATED"/>
    <property type="match status" value="1"/>
</dbReference>
<dbReference type="Pfam" id="PF02779">
    <property type="entry name" value="Transket_pyr"/>
    <property type="match status" value="1"/>
</dbReference>
<dbReference type="Pfam" id="PF22613">
    <property type="entry name" value="Transketolase_C_1"/>
    <property type="match status" value="1"/>
</dbReference>
<dbReference type="Pfam" id="PF00456">
    <property type="entry name" value="Transketolase_N"/>
    <property type="match status" value="1"/>
</dbReference>
<dbReference type="SMART" id="SM00861">
    <property type="entry name" value="Transket_pyr"/>
    <property type="match status" value="1"/>
</dbReference>
<dbReference type="SUPFAM" id="SSF52518">
    <property type="entry name" value="Thiamin diphosphate-binding fold (THDP-binding)"/>
    <property type="match status" value="2"/>
</dbReference>
<dbReference type="SUPFAM" id="SSF52922">
    <property type="entry name" value="TK C-terminal domain-like"/>
    <property type="match status" value="1"/>
</dbReference>
<dbReference type="PROSITE" id="PS00801">
    <property type="entry name" value="TRANSKETOLASE_1"/>
    <property type="match status" value="1"/>
</dbReference>
<dbReference type="PROSITE" id="PS00802">
    <property type="entry name" value="TRANSKETOLASE_2"/>
    <property type="match status" value="1"/>
</dbReference>
<name>TKT1_VIBVU</name>
<sequence>MPSRKHLANAIRALSMDGVQKANSGHPGAPMGMADIAEVLWRGHLNHNPSNPEWADRDRFVLSNGHGSMLIYSLLHLSGYELSIDDLKNFRQLHSKTPGHPEYGYAPGIETTTGPLGQGITNAVGMAMAEKALAAQFNKPGHDIVDHFTYVFMGDGCLMEGISHEACSLAGTLGLGKLIAFWDDNGISIDGHVEGWFSDDTPKRFEAYGWHVIPAVDGHNAEAINAAIEAAKADPRPTLICTKTIIGFGSPNKSGSHDCHGAPLGAEEIAAAREFLGWEHPAFEIPADVYAEWDAKAAGAEKEAAWNAKFDAYAAAYPTEAAELKRRLNGELPAEWEEKANQIIADLQANPANIASRKASQNALEAFGKMLPEFMGGSADLAPSNLTMWSGSKSLEANDFSGNYIHYGVREFGMTAIMNGIALHGGFVPYGATFLMFMEYARNAMRMAALMKVQNIQVYTHDSIGLGEDGPTHQPVEQIASLRLTPNMSTWRPCDQVESAVAWKLAIERKDGPSALIFSRQNLAQQPRSAEQVADIAKGGYILKDSDGKPELILIATGSEVELAVKAAEQLTAEGKKVRVVSMPATDTFDKQDAAYREAVLPSDVTARIAIEAGIADFWYKYVGFDGRIIGMTTFGESAPADQLFEMFGFTVENVVNTAKELLA</sequence>
<gene>
    <name type="primary">tkt1</name>
    <name type="ordered locus">VV1_1537</name>
</gene>
<keyword id="KW-0106">Calcium</keyword>
<keyword id="KW-0460">Magnesium</keyword>
<keyword id="KW-0479">Metal-binding</keyword>
<keyword id="KW-0786">Thiamine pyrophosphate</keyword>
<keyword id="KW-0808">Transferase</keyword>